<proteinExistence type="inferred from homology"/>
<feature type="chain" id="PRO_0000382597" description="Cytosolic Fe-S cluster assembly factor NUBP1 homolog">
    <location>
        <begin position="1"/>
        <end position="313"/>
    </location>
</feature>
<feature type="region of interest" description="Disordered" evidence="3">
    <location>
        <begin position="1"/>
        <end position="25"/>
    </location>
</feature>
<feature type="binding site" evidence="2">
    <location>
        <position position="12"/>
    </location>
    <ligand>
        <name>[4Fe-4S] cluster</name>
        <dbReference type="ChEBI" id="CHEBI:49883"/>
        <label>1</label>
    </ligand>
</feature>
<feature type="binding site" evidence="2">
    <location>
        <position position="26"/>
    </location>
    <ligand>
        <name>[4Fe-4S] cluster</name>
        <dbReference type="ChEBI" id="CHEBI:49883"/>
        <label>1</label>
    </ligand>
</feature>
<feature type="binding site" evidence="2">
    <location>
        <position position="29"/>
    </location>
    <ligand>
        <name>[4Fe-4S] cluster</name>
        <dbReference type="ChEBI" id="CHEBI:49883"/>
        <label>1</label>
    </ligand>
</feature>
<feature type="binding site" evidence="2">
    <location>
        <position position="35"/>
    </location>
    <ligand>
        <name>[4Fe-4S] cluster</name>
        <dbReference type="ChEBI" id="CHEBI:49883"/>
        <label>1</label>
    </ligand>
</feature>
<feature type="binding site" evidence="2">
    <location>
        <begin position="66"/>
        <end position="73"/>
    </location>
    <ligand>
        <name>ATP</name>
        <dbReference type="ChEBI" id="CHEBI:30616"/>
    </ligand>
</feature>
<feature type="binding site" evidence="2">
    <location>
        <position position="240"/>
    </location>
    <ligand>
        <name>[4Fe-4S] cluster</name>
        <dbReference type="ChEBI" id="CHEBI:49883"/>
        <label>2</label>
        <note>ligand shared with heterodimeric partner</note>
    </ligand>
</feature>
<feature type="binding site" evidence="2">
    <location>
        <position position="243"/>
    </location>
    <ligand>
        <name>[4Fe-4S] cluster</name>
        <dbReference type="ChEBI" id="CHEBI:49883"/>
        <label>2</label>
        <note>ligand shared with heterodimeric partner</note>
    </ligand>
</feature>
<gene>
    <name evidence="4" type="primary">nubp-1</name>
    <name evidence="4" type="ORF">CBG03788</name>
</gene>
<accession>A8WWQ7</accession>
<organism>
    <name type="scientific">Caenorhabditis briggsae</name>
    <dbReference type="NCBI Taxonomy" id="6238"/>
    <lineage>
        <taxon>Eukaryota</taxon>
        <taxon>Metazoa</taxon>
        <taxon>Ecdysozoa</taxon>
        <taxon>Nematoda</taxon>
        <taxon>Chromadorea</taxon>
        <taxon>Rhabditida</taxon>
        <taxon>Rhabditina</taxon>
        <taxon>Rhabditomorpha</taxon>
        <taxon>Rhabditoidea</taxon>
        <taxon>Rhabditidae</taxon>
        <taxon>Peloderinae</taxon>
        <taxon>Caenorhabditis</taxon>
    </lineage>
</organism>
<protein>
    <recommendedName>
        <fullName evidence="2">Cytosolic Fe-S cluster assembly factor NUBP1 homolog</fullName>
    </recommendedName>
    <alternativeName>
        <fullName evidence="4">Nucleotide binding protein 1 homolog</fullName>
    </alternativeName>
</protein>
<evidence type="ECO:0000250" key="1">
    <source>
        <dbReference type="UniProtKB" id="Q93459"/>
    </source>
</evidence>
<evidence type="ECO:0000255" key="2">
    <source>
        <dbReference type="HAMAP-Rule" id="MF_03038"/>
    </source>
</evidence>
<evidence type="ECO:0000256" key="3">
    <source>
        <dbReference type="SAM" id="MobiDB-lite"/>
    </source>
</evidence>
<evidence type="ECO:0000312" key="4">
    <source>
        <dbReference type="WormBase" id="CBG03788"/>
    </source>
</evidence>
<comment type="function">
    <text evidence="1 2">Component of the cytosolic iron-sulfur (Fe/S) protein assembly (CIA) machinery. Required for maturation of extramitochondrial Fe-S proteins. The NUBP1-NUBP2 heterotetramer forms a Fe-S scaffold complex, mediating the de novo assembly of an Fe-S cluster and its transfer to target apoproteins. Regulates cilium formation and structure.</text>
</comment>
<comment type="cofactor">
    <cofactor evidence="2">
        <name>[4Fe-4S] cluster</name>
        <dbReference type="ChEBI" id="CHEBI:49883"/>
    </cofactor>
    <text evidence="2">Binds 4 [4Fe-4S] clusters per heterotetramer. Contains two stable clusters in the N-termini of NUBP1 and two labile, bridging clusters between subunits of the NUBP1-NUBP2 heterotetramer.</text>
</comment>
<comment type="subunit">
    <text evidence="2">Heterotetramer of 2 NUBP1 and 2 NUBP2 chains.</text>
</comment>
<comment type="subcellular location">
    <subcellularLocation>
        <location evidence="2">Cytoplasm</location>
    </subcellularLocation>
    <subcellularLocation>
        <location evidence="1">Cell projection</location>
    </subcellularLocation>
</comment>
<comment type="similarity">
    <text evidence="2">Belongs to the Mrp/NBP35 ATP-binding proteins family. NUBP1/NBP35 subfamily.</text>
</comment>
<name>NUBP1_CAEBR</name>
<keyword id="KW-0004">4Fe-4S</keyword>
<keyword id="KW-0067">ATP-binding</keyword>
<keyword id="KW-0966">Cell projection</keyword>
<keyword id="KW-0969">Cilium</keyword>
<keyword id="KW-0970">Cilium biogenesis/degradation</keyword>
<keyword id="KW-0963">Cytoplasm</keyword>
<keyword id="KW-0408">Iron</keyword>
<keyword id="KW-0411">Iron-sulfur</keyword>
<keyword id="KW-0479">Metal-binding</keyword>
<keyword id="KW-0547">Nucleotide-binding</keyword>
<keyword id="KW-1185">Reference proteome</keyword>
<dbReference type="EMBL" id="HE600906">
    <property type="protein sequence ID" value="CAP24619.1"/>
    <property type="molecule type" value="Genomic_DNA"/>
</dbReference>
<dbReference type="RefSeq" id="XP_002639232.1">
    <property type="nucleotide sequence ID" value="XM_002639186.1"/>
</dbReference>
<dbReference type="SMR" id="A8WWQ7"/>
<dbReference type="FunCoup" id="A8WWQ7">
    <property type="interactions" value="1585"/>
</dbReference>
<dbReference type="STRING" id="6238.A8WWQ7"/>
<dbReference type="EnsemblMetazoa" id="CBG03788.1">
    <property type="protein sequence ID" value="CBG03788.1"/>
    <property type="gene ID" value="WBGene00026573"/>
</dbReference>
<dbReference type="GeneID" id="8581226"/>
<dbReference type="KEGG" id="cbr:CBG_03788"/>
<dbReference type="CTD" id="8581226"/>
<dbReference type="WormBase" id="CBG03788">
    <property type="protein sequence ID" value="CBP14824"/>
    <property type="gene ID" value="WBGene00026573"/>
    <property type="gene designation" value="Cbr-nubp-1"/>
</dbReference>
<dbReference type="eggNOG" id="KOG3022">
    <property type="taxonomic scope" value="Eukaryota"/>
</dbReference>
<dbReference type="HOGENOM" id="CLU_024839_0_1_1"/>
<dbReference type="InParanoid" id="A8WWQ7"/>
<dbReference type="OMA" id="VSGCPMR"/>
<dbReference type="Proteomes" id="UP000008549">
    <property type="component" value="Unassembled WGS sequence"/>
</dbReference>
<dbReference type="GO" id="GO:0005929">
    <property type="term" value="C:cilium"/>
    <property type="evidence" value="ECO:0007669"/>
    <property type="project" value="UniProtKB-KW"/>
</dbReference>
<dbReference type="GO" id="GO:0005829">
    <property type="term" value="C:cytosol"/>
    <property type="evidence" value="ECO:0000250"/>
    <property type="project" value="UniProtKB"/>
</dbReference>
<dbReference type="GO" id="GO:0051539">
    <property type="term" value="F:4 iron, 4 sulfur cluster binding"/>
    <property type="evidence" value="ECO:0007669"/>
    <property type="project" value="UniProtKB-UniRule"/>
</dbReference>
<dbReference type="GO" id="GO:0005524">
    <property type="term" value="F:ATP binding"/>
    <property type="evidence" value="ECO:0007669"/>
    <property type="project" value="UniProtKB-KW"/>
</dbReference>
<dbReference type="GO" id="GO:0016887">
    <property type="term" value="F:ATP hydrolysis activity"/>
    <property type="evidence" value="ECO:0007669"/>
    <property type="project" value="InterPro"/>
</dbReference>
<dbReference type="GO" id="GO:0140663">
    <property type="term" value="F:ATP-dependent FeS chaperone activity"/>
    <property type="evidence" value="ECO:0007669"/>
    <property type="project" value="InterPro"/>
</dbReference>
<dbReference type="GO" id="GO:0051536">
    <property type="term" value="F:iron-sulfur cluster binding"/>
    <property type="evidence" value="ECO:0000250"/>
    <property type="project" value="UniProtKB"/>
</dbReference>
<dbReference type="GO" id="GO:0046872">
    <property type="term" value="F:metal ion binding"/>
    <property type="evidence" value="ECO:0007669"/>
    <property type="project" value="UniProtKB-KW"/>
</dbReference>
<dbReference type="GO" id="GO:0030030">
    <property type="term" value="P:cell projection organization"/>
    <property type="evidence" value="ECO:0007669"/>
    <property type="project" value="UniProtKB-KW"/>
</dbReference>
<dbReference type="GO" id="GO:0016226">
    <property type="term" value="P:iron-sulfur cluster assembly"/>
    <property type="evidence" value="ECO:0000250"/>
    <property type="project" value="UniProtKB"/>
</dbReference>
<dbReference type="GO" id="GO:1902855">
    <property type="term" value="P:regulation of non-motile cilium assembly"/>
    <property type="evidence" value="ECO:0007669"/>
    <property type="project" value="EnsemblMetazoa"/>
</dbReference>
<dbReference type="CDD" id="cd02037">
    <property type="entry name" value="Mrp_NBP35"/>
    <property type="match status" value="1"/>
</dbReference>
<dbReference type="FunFam" id="3.40.50.300:FF:002354">
    <property type="entry name" value="Cytosolic Fe-S cluster assembly factor NUBP1 homolog"/>
    <property type="match status" value="1"/>
</dbReference>
<dbReference type="Gene3D" id="3.40.50.300">
    <property type="entry name" value="P-loop containing nucleotide triphosphate hydrolases"/>
    <property type="match status" value="1"/>
</dbReference>
<dbReference type="HAMAP" id="MF_02040">
    <property type="entry name" value="Mrp_NBP35"/>
    <property type="match status" value="1"/>
</dbReference>
<dbReference type="HAMAP" id="MF_03038">
    <property type="entry name" value="NUBP1"/>
    <property type="match status" value="1"/>
</dbReference>
<dbReference type="InterPro" id="IPR003593">
    <property type="entry name" value="AAA+_ATPase"/>
</dbReference>
<dbReference type="InterPro" id="IPR000808">
    <property type="entry name" value="Mrp-like_CS"/>
</dbReference>
<dbReference type="InterPro" id="IPR019591">
    <property type="entry name" value="Mrp/NBP35_ATP-bd"/>
</dbReference>
<dbReference type="InterPro" id="IPR028601">
    <property type="entry name" value="NUBP1/Nbp35"/>
</dbReference>
<dbReference type="InterPro" id="IPR027417">
    <property type="entry name" value="P-loop_NTPase"/>
</dbReference>
<dbReference type="InterPro" id="IPR033756">
    <property type="entry name" value="YlxH/NBP35"/>
</dbReference>
<dbReference type="PANTHER" id="PTHR23264:SF35">
    <property type="entry name" value="CYTOSOLIC FE-S CLUSTER ASSEMBLY FACTOR NUBP1"/>
    <property type="match status" value="1"/>
</dbReference>
<dbReference type="PANTHER" id="PTHR23264">
    <property type="entry name" value="NUCLEOTIDE-BINDING PROTEIN NBP35 YEAST -RELATED"/>
    <property type="match status" value="1"/>
</dbReference>
<dbReference type="Pfam" id="PF10609">
    <property type="entry name" value="ParA"/>
    <property type="match status" value="1"/>
</dbReference>
<dbReference type="SMART" id="SM00382">
    <property type="entry name" value="AAA"/>
    <property type="match status" value="1"/>
</dbReference>
<dbReference type="SUPFAM" id="SSF52540">
    <property type="entry name" value="P-loop containing nucleoside triphosphate hydrolases"/>
    <property type="match status" value="1"/>
</dbReference>
<dbReference type="PROSITE" id="PS01215">
    <property type="entry name" value="MRP"/>
    <property type="match status" value="1"/>
</dbReference>
<reference key="1">
    <citation type="journal article" date="2003" name="PLoS Biol.">
        <title>The genome sequence of Caenorhabditis briggsae: a platform for comparative genomics.</title>
        <authorList>
            <person name="Stein L.D."/>
            <person name="Bao Z."/>
            <person name="Blasiar D."/>
            <person name="Blumenthal T."/>
            <person name="Brent M.R."/>
            <person name="Chen N."/>
            <person name="Chinwalla A."/>
            <person name="Clarke L."/>
            <person name="Clee C."/>
            <person name="Coghlan A."/>
            <person name="Coulson A."/>
            <person name="D'Eustachio P."/>
            <person name="Fitch D.H.A."/>
            <person name="Fulton L.A."/>
            <person name="Fulton R.E."/>
            <person name="Griffiths-Jones S."/>
            <person name="Harris T.W."/>
            <person name="Hillier L.W."/>
            <person name="Kamath R."/>
            <person name="Kuwabara P.E."/>
            <person name="Mardis E.R."/>
            <person name="Marra M.A."/>
            <person name="Miner T.L."/>
            <person name="Minx P."/>
            <person name="Mullikin J.C."/>
            <person name="Plumb R.W."/>
            <person name="Rogers J."/>
            <person name="Schein J.E."/>
            <person name="Sohrmann M."/>
            <person name="Spieth J."/>
            <person name="Stajich J.E."/>
            <person name="Wei C."/>
            <person name="Willey D."/>
            <person name="Wilson R.K."/>
            <person name="Durbin R.M."/>
            <person name="Waterston R.H."/>
        </authorList>
    </citation>
    <scope>NUCLEOTIDE SEQUENCE [LARGE SCALE GENOMIC DNA]</scope>
    <source>
        <strain>AF16</strain>
    </source>
</reference>
<sequence>MSDVPEDANAGCPGTGSAGAGKASGCAGCPNQGACATGQGPPPDADVPKIQDRFSRIKHKILILSGKGGVGKSTLTSNLARALASDPSKQVAILDVDICGPSQPRMMGVEDEEVHNSADGWTPVGIQPNLTLMSIAFLIGDKNDAVIWRGARKNGMIKQFLKDVDWGEVDYLLIDTPPGTSDEHISLVQFLLQAGPLDGALIVSTPQEVSLLDVRKEVSFCIKTKVPILGVVENMARFVCPNCAHTTLLFPTSTGGAEKMCEDSNLELLAQLPLEPALAEALDNGEDFFETNPDSTLAKSFMDLAEKVKAKLH</sequence>